<reference key="1">
    <citation type="submission" date="2004-08" db="EMBL/GenBank/DDBJ databases">
        <title>Molecular identity of P-type calcium current in Purkinje neurons.</title>
        <authorList>
            <person name="Richards K.S."/>
            <person name="Swensen A.M."/>
            <person name="Lipscombe D."/>
        </authorList>
    </citation>
    <scope>NUCLEOTIDE SEQUENCE [MRNA]</scope>
    <source>
        <strain>Swiss Webster</strain>
        <tissue>Brain</tissue>
    </source>
</reference>
<reference key="2">
    <citation type="journal article" date="1996" name="Cell">
        <title>Absence epilepsy in tottering mutant mice is associated with calcium channel defects.</title>
        <authorList>
            <person name="Fletcher C.F."/>
            <person name="Lutz C.M."/>
            <person name="O'Sullivan T.N."/>
            <person name="Shaughnessy J.D. Jr."/>
            <person name="Hawkes R."/>
            <person name="Frankel W.N."/>
            <person name="Copeland N.G."/>
            <person name="Jenkins N.A."/>
        </authorList>
    </citation>
    <scope>NUCLEOTIDE SEQUENCE [MRNA] OF 49-2212</scope>
    <scope>VARIANT TG LEU-649</scope>
    <source>
        <strain>DBA/2J</strain>
    </source>
</reference>
<reference key="3">
    <citation type="journal article" date="2006" name="Mol. Cell. Proteomics">
        <title>Comprehensive identification of phosphorylation sites in postsynaptic density preparations.</title>
        <authorList>
            <person name="Trinidad J.C."/>
            <person name="Specht C.G."/>
            <person name="Thalhammer A."/>
            <person name="Schoepfer R."/>
            <person name="Burlingame A.L."/>
        </authorList>
    </citation>
    <scope>PHOSPHORYLATION [LARGE SCALE ANALYSIS] AT SER-792</scope>
    <scope>IDENTIFICATION BY MASS SPECTROMETRY [LARGE SCALE ANALYSIS]</scope>
    <source>
        <tissue>Brain</tissue>
    </source>
</reference>
<reference key="4">
    <citation type="journal article" date="2007" name="Mol. Cell. Proteomics">
        <title>Qualitative and quantitative analyses of protein phosphorylation in naive and stimulated mouse synaptosomal preparations.</title>
        <authorList>
            <person name="Munton R.P."/>
            <person name="Tweedie-Cullen R."/>
            <person name="Livingstone-Zatchej M."/>
            <person name="Weinandy F."/>
            <person name="Waidelich M."/>
            <person name="Longo D."/>
            <person name="Gehrig P."/>
            <person name="Potthast F."/>
            <person name="Rutishauser D."/>
            <person name="Gerrits B."/>
            <person name="Panse C."/>
            <person name="Schlapbach R."/>
            <person name="Mansuy I.M."/>
        </authorList>
    </citation>
    <scope>IDENTIFICATION BY MASS SPECTROMETRY [LARGE SCALE ANALYSIS]</scope>
    <source>
        <tissue>Brain cortex</tissue>
    </source>
</reference>
<reference key="5">
    <citation type="journal article" date="2010" name="Cell">
        <title>A tissue-specific atlas of mouse protein phosphorylation and expression.</title>
        <authorList>
            <person name="Huttlin E.L."/>
            <person name="Jedrychowski M.P."/>
            <person name="Elias J.E."/>
            <person name="Goswami T."/>
            <person name="Rad R."/>
            <person name="Beausoleil S.A."/>
            <person name="Villen J."/>
            <person name="Haas W."/>
            <person name="Sowa M.E."/>
            <person name="Gygi S.P."/>
        </authorList>
    </citation>
    <scope>PHOSPHORYLATION [LARGE SCALE ANALYSIS] AT THR-411; SER-450; SER-453; SER-752; SER-755; SER-1038; SER-1042; SER-1051; THR-1935; SER-2016 AND SER-2071</scope>
    <scope>IDENTIFICATION BY MASS SPECTROMETRY [LARGE SCALE ANALYSIS]</scope>
    <source>
        <tissue>Brain</tissue>
    </source>
</reference>
<accession>P97445</accession>
<accession>Q2TPN3</accession>
<sequence length="2368" mass="267647">MARFGDEMPGRYGAGGGGSGPAAGVVVGAAGGRGAGGSRQGGQPGAQRMYKQSMAQRARTMALYNPIPVRQNCLTVNRSLFLFSEDNVVRKYAKKITEWPPFEYMILATIIANCIVLALEQHLPDDDKTPMSERLDDTEPYFIGIFCFEAGIKIVALGFAFHKGSYLRNGWNVMDFVVVLTGILATVGTEFDLRTLRAVRVLRPLKLVSGIPSLQVVLKSIMKAMIPLLQIGLLLFFAILIFAIIGLEFYMGKFHTTCFEEGTDDIQGESPAPCGTEEPARTCPNGTKCQPYWEGPNNGITQFDNILFAVLTVFQCITMEGWTDLLYNSNDASGNTWNWLYFIPLIIIGSFFMLNLVLGVLSGEFAKERERVENRRAFLKLRRQQQIERELNGYMEWISKAEEVILAEDETDVEQRHPFDGALRRATLKKSKTDLLNPEEAEDQLADIASVGSPFARASIKSAKLENSTFFHKKERRMRFYIRRMVKTQAFYWTVLSLVALNTLCVAIVHYNQPEWLSDFLYYAEFIFLGLFMSEMFIKMYGLGTRPYFHSSFNCFDCGVIIGSIFEVIWAVIKPGTSFGISVLRALRLLRIFKVTKYWASLRNLVVSLLNSMKSIISLLFLLFLFIVVFALLGMQLFGGQFNFDEGTPPTNFDTFPAAIMTVFQILTGEDWNEVMYDGIKSQGGVQGGMVFSIYFIVLTLFGNYTLLNVFLAIAVDNLANAQELTKDEQEEEEAANQKLALQKAKEVAEVSPLSAANMSIAVKEQQKNQKPTKSVWEQRTSEMRKQNLLASREALYGDAAERWPTPYARPLRPDVKTHLDRPLVVDPQENRNNNTNKSRAPEALRPTARPRESARDPDARRAWPGSPERAPGREGPYGRESEPQQREHAPPREHAPWDADTERAKAGDAPRRHTHRPVAEGEPRRHRARRRPGDEPDDRPERRPRPRDATRPARAADGEGDDGERKRRHRHGPPAHDDRERRHRRRKENQGSGVPVSGPNLSTTRPIQQDLGRQDLPLAEDLDNMKNNKLATGEPASPHDSLGHSGLPPSPAKIGNSTNPGPALATNPQNAASRRTPNNPGNPSNPGPPKTPENSLIVTNPSSTQPNSAKTARKPEHMAVEIPPACPPLNHTVVQVNKNANPDPLPKKEEEKKEEEEADPGEDGPKPMPPYSSMFILSTTNPLRRLCHYILNLRYFEMCILMVIAMSSIALAAEDPVQPNAPRNNVLRYFDYVFTGVFTFEMVIKMIDLGLVLHQGAYFRDLWNILDFIVVSGALVAFAFTGNSKGKDINTIKSLRVLRVLRPLKTIKRLPKLKAVFDCVVNSLKNVFNILIVYMLFMFIFAVVAVQLFKGKFFHCTDESKEFERDCRGKYLLYEKNEVKARDREWKKYEFHYDNVLWALLTLFTVSTGEGWPQVLKHSVDATFENQGPSPGYRMEMSIFYVVYFVVFPFFFVNIFVALIIITFQEQGDKMMEEYSLEKNERACIDFAISAKPLTRHMPQNKQSFQYRMWQFVVSPPFEYTIMAMIALNTIVLMMKFYGASVAYENALRVFNIVFTSLFSLECVLKVMAFGILNYFRDAWNIFDFVTVLGSITDILVTEFGNNFINLSFLRLFRAARLIKLLRQGYTIRILLWTFVQSFKALPYVCLLIAMLFFIYAIIGMQVFGNIGIDGEDEDSDEDEFQITEHNNFRTFFQALMLLFRSATGEAWHNIMLSCLSGKPCDKNSGILTADCGNEFAYFYFVSFIFLCSFLMLNLFVAVIMDNFEYLTRDSSILGPHHLDEYVRVWAEYDPAACGRIHYKDMYSLLRVISPPLGLGKKCPHRVACKRLLRMDLPVADDNTVHFNSTLMALIRTALDIKIAKGGADKQQMDAELRKEMMAIWPNLSQKTLDLLVTPHKSTDLTVGKIYAAMMIMEYYRQSKAKKLQAMREEQNRTPLMFQRMEPPSPTQEGGPSQNALPSTQLDPGGGLMAHEGGMKESPSWVTQRAQEMFQKTGTWSPERGPPIDMPNSQPNSQSVEMREMGTDGYSDSEHYLPMEGQTRAASMPRLPAENQRRRGRPRGNDLSTISDTSPMKRSASVLGPKARRLDDYSLERVPPEENQRYHQRRRDRGHRTSERSLGRYTDVDTGLGTDLSMTTQSGDLPSKDRDQDRGRPKDRKHRPHHHHHHHHHHPPAPDRDRYAQERPDTGRARAREQRWSRSPSEGREHTTHRQGSSSVSGSPAPSTSGTSTPRRGRRQLPQTPCTPRPLVSYSPAPRRPAARRMAGPAAPPGGSPRGCRRAPRWPAHAPEGPRPRGADYTEPDSPREPPGGAHDPAPRSPRTPRAAGCASPRHGRRLPNGYYAGHGAPRPRTARRGAHDAYSESEDDWC</sequence>
<proteinExistence type="evidence at protein level"/>
<protein>
    <recommendedName>
        <fullName>Voltage-dependent P/Q-type calcium channel subunit alpha-1A</fullName>
    </recommendedName>
    <alternativeName>
        <fullName>Brain calcium channel I</fullName>
        <shortName>BI</shortName>
    </alternativeName>
    <alternativeName>
        <fullName>Calcium channel, L type, alpha-1 polypeptide isoform 4</fullName>
    </alternativeName>
    <alternativeName>
        <fullName>Voltage-gated calcium channel subunit alpha Cav2.1</fullName>
    </alternativeName>
</protein>
<evidence type="ECO:0000250" key="1">
    <source>
        <dbReference type="UniProtKB" id="O00555"/>
    </source>
</evidence>
<evidence type="ECO:0000250" key="2">
    <source>
        <dbReference type="UniProtKB" id="P07293"/>
    </source>
</evidence>
<evidence type="ECO:0000250" key="3">
    <source>
        <dbReference type="UniProtKB" id="P27884"/>
    </source>
</evidence>
<evidence type="ECO:0000250" key="4">
    <source>
        <dbReference type="UniProtKB" id="P54282"/>
    </source>
</evidence>
<evidence type="ECO:0000255" key="5"/>
<evidence type="ECO:0000256" key="6">
    <source>
        <dbReference type="SAM" id="MobiDB-lite"/>
    </source>
</evidence>
<evidence type="ECO:0000269" key="7">
    <source>
    </source>
</evidence>
<evidence type="ECO:0000305" key="8"/>
<evidence type="ECO:0000312" key="9">
    <source>
        <dbReference type="MGI" id="MGI:109482"/>
    </source>
</evidence>
<evidence type="ECO:0007744" key="10">
    <source>
    </source>
</evidence>
<evidence type="ECO:0007744" key="11">
    <source>
    </source>
</evidence>
<organism>
    <name type="scientific">Mus musculus</name>
    <name type="common">Mouse</name>
    <dbReference type="NCBI Taxonomy" id="10090"/>
    <lineage>
        <taxon>Eukaryota</taxon>
        <taxon>Metazoa</taxon>
        <taxon>Chordata</taxon>
        <taxon>Craniata</taxon>
        <taxon>Vertebrata</taxon>
        <taxon>Euteleostomi</taxon>
        <taxon>Mammalia</taxon>
        <taxon>Eutheria</taxon>
        <taxon>Euarchontoglires</taxon>
        <taxon>Glires</taxon>
        <taxon>Rodentia</taxon>
        <taxon>Myomorpha</taxon>
        <taxon>Muroidea</taxon>
        <taxon>Muridae</taxon>
        <taxon>Murinae</taxon>
        <taxon>Mus</taxon>
        <taxon>Mus</taxon>
    </lineage>
</organism>
<gene>
    <name evidence="9" type="primary">Cacna1a</name>
    <name type="synonym">Caca1a</name>
    <name type="synonym">Cach4</name>
    <name type="synonym">Cacn3</name>
    <name type="synonym">Cacnl1a4</name>
    <name type="synonym">Ccha1a</name>
</gene>
<dbReference type="EMBL" id="AY714490">
    <property type="protein sequence ID" value="AAW56205.1"/>
    <property type="molecule type" value="mRNA"/>
</dbReference>
<dbReference type="EMBL" id="U76716">
    <property type="protein sequence ID" value="AAC52940.1"/>
    <property type="molecule type" value="mRNA"/>
</dbReference>
<dbReference type="CCDS" id="CCDS52618.1"/>
<dbReference type="RefSeq" id="NP_031604.3">
    <property type="nucleotide sequence ID" value="NM_007578.3"/>
</dbReference>
<dbReference type="SMR" id="P97445"/>
<dbReference type="BioGRID" id="198430">
    <property type="interactions" value="28"/>
</dbReference>
<dbReference type="FunCoup" id="P97445">
    <property type="interactions" value="1230"/>
</dbReference>
<dbReference type="IntAct" id="P97445">
    <property type="interactions" value="3"/>
</dbReference>
<dbReference type="MINT" id="P97445"/>
<dbReference type="STRING" id="10090.ENSMUSP00000112436"/>
<dbReference type="GlyCosmos" id="P97445">
    <property type="glycosylation" value="2 sites, No reported glycans"/>
</dbReference>
<dbReference type="GlyGen" id="P97445">
    <property type="glycosylation" value="7 sites, 1 N-linked glycan (1 site), 1 O-linked glycan (2 sites)"/>
</dbReference>
<dbReference type="iPTMnet" id="P97445"/>
<dbReference type="PhosphoSitePlus" id="P97445"/>
<dbReference type="SwissPalm" id="P97445"/>
<dbReference type="PaxDb" id="10090-ENSMUSP00000112436"/>
<dbReference type="PeptideAtlas" id="P97445"/>
<dbReference type="ProteomicsDB" id="273878"/>
<dbReference type="Pumba" id="P97445"/>
<dbReference type="Antibodypedia" id="26386">
    <property type="antibodies" value="98 antibodies from 22 providers"/>
</dbReference>
<dbReference type="DNASU" id="12286"/>
<dbReference type="Ensembl" id="ENSMUST00000121390.8">
    <property type="protein sequence ID" value="ENSMUSP00000112436.2"/>
    <property type="gene ID" value="ENSMUSG00000034656.19"/>
</dbReference>
<dbReference type="GeneID" id="12286"/>
<dbReference type="KEGG" id="mmu:12286"/>
<dbReference type="UCSC" id="uc009mmn.2">
    <property type="organism name" value="mouse"/>
</dbReference>
<dbReference type="AGR" id="MGI:109482"/>
<dbReference type="CTD" id="773"/>
<dbReference type="MGI" id="MGI:109482">
    <property type="gene designation" value="Cacna1a"/>
</dbReference>
<dbReference type="VEuPathDB" id="HostDB:ENSMUSG00000034656"/>
<dbReference type="eggNOG" id="KOG2301">
    <property type="taxonomic scope" value="Eukaryota"/>
</dbReference>
<dbReference type="GeneTree" id="ENSGT00940000156518"/>
<dbReference type="HOGENOM" id="CLU_000540_1_0_1"/>
<dbReference type="InParanoid" id="P97445"/>
<dbReference type="OMA" id="RWKVNFA"/>
<dbReference type="OrthoDB" id="431720at2759"/>
<dbReference type="PhylomeDB" id="P97445"/>
<dbReference type="TreeFam" id="TF312805"/>
<dbReference type="Reactome" id="R-MMU-112308">
    <property type="pathway name" value="Presynaptic depolarization and calcium channel opening"/>
</dbReference>
<dbReference type="Reactome" id="R-MMU-422356">
    <property type="pathway name" value="Regulation of insulin secretion"/>
</dbReference>
<dbReference type="BioGRID-ORCS" id="12286">
    <property type="hits" value="3 hits in 78 CRISPR screens"/>
</dbReference>
<dbReference type="CD-CODE" id="CE726F99">
    <property type="entry name" value="Postsynaptic density"/>
</dbReference>
<dbReference type="ChiTaRS" id="Cacna1a">
    <property type="organism name" value="mouse"/>
</dbReference>
<dbReference type="PRO" id="PR:P97445"/>
<dbReference type="Proteomes" id="UP000000589">
    <property type="component" value="Chromosome 8"/>
</dbReference>
<dbReference type="RNAct" id="P97445">
    <property type="molecule type" value="protein"/>
</dbReference>
<dbReference type="Bgee" id="ENSMUSG00000034656">
    <property type="expression patterns" value="Expressed in cerebellar cortex and 169 other cell types or tissues"/>
</dbReference>
<dbReference type="ExpressionAtlas" id="P97445">
    <property type="expression patterns" value="baseline and differential"/>
</dbReference>
<dbReference type="GO" id="GO:0030425">
    <property type="term" value="C:dendrite"/>
    <property type="evidence" value="ECO:0000314"/>
    <property type="project" value="MGI"/>
</dbReference>
<dbReference type="GO" id="GO:0098978">
    <property type="term" value="C:glutamatergic synapse"/>
    <property type="evidence" value="ECO:0000314"/>
    <property type="project" value="SynGO"/>
</dbReference>
<dbReference type="GO" id="GO:0043025">
    <property type="term" value="C:neuronal cell body"/>
    <property type="evidence" value="ECO:0000314"/>
    <property type="project" value="MGI"/>
</dbReference>
<dbReference type="GO" id="GO:0045211">
    <property type="term" value="C:postsynaptic membrane"/>
    <property type="evidence" value="ECO:0000314"/>
    <property type="project" value="SynGO"/>
</dbReference>
<dbReference type="GO" id="GO:0048787">
    <property type="term" value="C:presynaptic active zone membrane"/>
    <property type="evidence" value="ECO:0000314"/>
    <property type="project" value="SynGO"/>
</dbReference>
<dbReference type="GO" id="GO:0005891">
    <property type="term" value="C:voltage-gated calcium channel complex"/>
    <property type="evidence" value="ECO:0000314"/>
    <property type="project" value="MGI"/>
</dbReference>
<dbReference type="GO" id="GO:0008331">
    <property type="term" value="F:high voltage-gated calcium channel activity"/>
    <property type="evidence" value="ECO:0000315"/>
    <property type="project" value="MGI"/>
</dbReference>
<dbReference type="GO" id="GO:0046872">
    <property type="term" value="F:metal ion binding"/>
    <property type="evidence" value="ECO:0007669"/>
    <property type="project" value="UniProtKB-KW"/>
</dbReference>
<dbReference type="GO" id="GO:0005245">
    <property type="term" value="F:voltage-gated calcium channel activity"/>
    <property type="evidence" value="ECO:0000314"/>
    <property type="project" value="MGI"/>
</dbReference>
<dbReference type="GO" id="GO:0099626">
    <property type="term" value="F:voltage-gated calcium channel activity involved in regulation of presynaptic cytosolic calcium levels"/>
    <property type="evidence" value="ECO:0000314"/>
    <property type="project" value="SynGO"/>
</dbReference>
<dbReference type="GO" id="GO:0007628">
    <property type="term" value="P:adult walking behavior"/>
    <property type="evidence" value="ECO:0000315"/>
    <property type="project" value="MGI"/>
</dbReference>
<dbReference type="GO" id="GO:0048266">
    <property type="term" value="P:behavioral response to pain"/>
    <property type="evidence" value="ECO:0000315"/>
    <property type="project" value="MGI"/>
</dbReference>
<dbReference type="GO" id="GO:0070588">
    <property type="term" value="P:calcium ion transmembrane transport"/>
    <property type="evidence" value="ECO:0000250"/>
    <property type="project" value="UniProtKB"/>
</dbReference>
<dbReference type="GO" id="GO:0006816">
    <property type="term" value="P:calcium ion transport"/>
    <property type="evidence" value="ECO:0000315"/>
    <property type="project" value="MGI"/>
</dbReference>
<dbReference type="GO" id="GO:0048791">
    <property type="term" value="P:calcium ion-regulated exocytosis of neurotransmitter"/>
    <property type="evidence" value="ECO:0000315"/>
    <property type="project" value="MGI"/>
</dbReference>
<dbReference type="GO" id="GO:0017156">
    <property type="term" value="P:calcium-ion regulated exocytosis"/>
    <property type="evidence" value="ECO:0000315"/>
    <property type="project" value="MGI"/>
</dbReference>
<dbReference type="GO" id="GO:0021953">
    <property type="term" value="P:central nervous system neuron differentiation"/>
    <property type="evidence" value="ECO:0000315"/>
    <property type="project" value="MGI"/>
</dbReference>
<dbReference type="GO" id="GO:0021679">
    <property type="term" value="P:cerebellar molecular layer development"/>
    <property type="evidence" value="ECO:0000315"/>
    <property type="project" value="MGI"/>
</dbReference>
<dbReference type="GO" id="GO:0021702">
    <property type="term" value="P:cerebellar Purkinje cell differentiation"/>
    <property type="evidence" value="ECO:0000315"/>
    <property type="project" value="MGI"/>
</dbReference>
<dbReference type="GO" id="GO:0021680">
    <property type="term" value="P:cerebellar Purkinje cell layer development"/>
    <property type="evidence" value="ECO:0000315"/>
    <property type="project" value="MGI"/>
</dbReference>
<dbReference type="GO" id="GO:0021590">
    <property type="term" value="P:cerebellum maturation"/>
    <property type="evidence" value="ECO:0000315"/>
    <property type="project" value="MGI"/>
</dbReference>
<dbReference type="GO" id="GO:0007268">
    <property type="term" value="P:chemical synaptic transmission"/>
    <property type="evidence" value="ECO:0000315"/>
    <property type="project" value="MGI"/>
</dbReference>
<dbReference type="GO" id="GO:0048813">
    <property type="term" value="P:dendrite morphogenesis"/>
    <property type="evidence" value="ECO:0000315"/>
    <property type="project" value="MGI"/>
</dbReference>
<dbReference type="GO" id="GO:0051649">
    <property type="term" value="P:establishment of localization in cell"/>
    <property type="evidence" value="ECO:0000315"/>
    <property type="project" value="MGI"/>
</dbReference>
<dbReference type="GO" id="GO:0014051">
    <property type="term" value="P:gamma-aminobutyric acid secretion"/>
    <property type="evidence" value="ECO:0000315"/>
    <property type="project" value="MGI"/>
</dbReference>
<dbReference type="GO" id="GO:0007214">
    <property type="term" value="P:gamma-aminobutyric acid signaling pathway"/>
    <property type="evidence" value="ECO:0000315"/>
    <property type="project" value="MGI"/>
</dbReference>
<dbReference type="GO" id="GO:0042593">
    <property type="term" value="P:glucose homeostasis"/>
    <property type="evidence" value="ECO:0000315"/>
    <property type="project" value="MGI"/>
</dbReference>
<dbReference type="GO" id="GO:0042446">
    <property type="term" value="P:hormone biosynthetic process"/>
    <property type="evidence" value="ECO:0000315"/>
    <property type="project" value="MGI"/>
</dbReference>
<dbReference type="GO" id="GO:0030644">
    <property type="term" value="P:intracellular chloride ion homeostasis"/>
    <property type="evidence" value="ECO:0000315"/>
    <property type="project" value="MGI"/>
</dbReference>
<dbReference type="GO" id="GO:0051899">
    <property type="term" value="P:membrane depolarization"/>
    <property type="evidence" value="ECO:0000315"/>
    <property type="project" value="MGI"/>
</dbReference>
<dbReference type="GO" id="GO:0050883">
    <property type="term" value="P:musculoskeletal movement, spinal reflex action"/>
    <property type="evidence" value="ECO:0000315"/>
    <property type="project" value="MGI"/>
</dbReference>
<dbReference type="GO" id="GO:0032353">
    <property type="term" value="P:negative regulation of hormone biosynthetic process"/>
    <property type="evidence" value="ECO:0000315"/>
    <property type="project" value="MGI"/>
</dbReference>
<dbReference type="GO" id="GO:0043524">
    <property type="term" value="P:negative regulation of neuron apoptotic process"/>
    <property type="evidence" value="ECO:0000315"/>
    <property type="project" value="MGI"/>
</dbReference>
<dbReference type="GO" id="GO:0050877">
    <property type="term" value="P:nervous system process"/>
    <property type="evidence" value="ECO:0000315"/>
    <property type="project" value="MGI"/>
</dbReference>
<dbReference type="GO" id="GO:0050905">
    <property type="term" value="P:neuromuscular process"/>
    <property type="evidence" value="ECO:0000315"/>
    <property type="project" value="MGI"/>
</dbReference>
<dbReference type="GO" id="GO:0050885">
    <property type="term" value="P:neuromuscular process controlling balance"/>
    <property type="evidence" value="ECO:0000315"/>
    <property type="project" value="MGI"/>
</dbReference>
<dbReference type="GO" id="GO:0007274">
    <property type="term" value="P:neuromuscular synaptic transmission"/>
    <property type="evidence" value="ECO:0000315"/>
    <property type="project" value="MGI"/>
</dbReference>
<dbReference type="GO" id="GO:0051402">
    <property type="term" value="P:neuron apoptotic process"/>
    <property type="evidence" value="ECO:0000315"/>
    <property type="project" value="MGI"/>
</dbReference>
<dbReference type="GO" id="GO:0070050">
    <property type="term" value="P:neuron cellular homeostasis"/>
    <property type="evidence" value="ECO:0000315"/>
    <property type="project" value="MGI"/>
</dbReference>
<dbReference type="GO" id="GO:0007270">
    <property type="term" value="P:neuron-neuron synaptic transmission"/>
    <property type="evidence" value="ECO:0000315"/>
    <property type="project" value="MGI"/>
</dbReference>
<dbReference type="GO" id="GO:0007204">
    <property type="term" value="P:positive regulation of cytosolic calcium ion concentration"/>
    <property type="evidence" value="ECO:0000314"/>
    <property type="project" value="MGI"/>
</dbReference>
<dbReference type="GO" id="GO:0043113">
    <property type="term" value="P:receptor clustering"/>
    <property type="evidence" value="ECO:0000315"/>
    <property type="project" value="MGI"/>
</dbReference>
<dbReference type="GO" id="GO:0014056">
    <property type="term" value="P:regulation of acetylcholine secretion, neurotransmission"/>
    <property type="evidence" value="ECO:0000315"/>
    <property type="project" value="MGI"/>
</dbReference>
<dbReference type="GO" id="GO:0050770">
    <property type="term" value="P:regulation of axonogenesis"/>
    <property type="evidence" value="ECO:0000315"/>
    <property type="project" value="MGI"/>
</dbReference>
<dbReference type="GO" id="GO:0017158">
    <property type="term" value="P:regulation of calcium ion-dependent exocytosis"/>
    <property type="evidence" value="ECO:0000314"/>
    <property type="project" value="MGI"/>
</dbReference>
<dbReference type="GO" id="GO:0010817">
    <property type="term" value="P:regulation of hormone levels"/>
    <property type="evidence" value="ECO:0000315"/>
    <property type="project" value="MGI"/>
</dbReference>
<dbReference type="GO" id="GO:0042391">
    <property type="term" value="P:regulation of membrane potential"/>
    <property type="evidence" value="ECO:0000315"/>
    <property type="project" value="MGI"/>
</dbReference>
<dbReference type="GO" id="GO:0031335">
    <property type="term" value="P:regulation of sulfur amino acid metabolic process"/>
    <property type="evidence" value="ECO:0000315"/>
    <property type="project" value="MGI"/>
</dbReference>
<dbReference type="GO" id="GO:0048265">
    <property type="term" value="P:response to pain"/>
    <property type="evidence" value="ECO:0000315"/>
    <property type="project" value="MGI"/>
</dbReference>
<dbReference type="GO" id="GO:0060024">
    <property type="term" value="P:rhythmic synaptic transmission"/>
    <property type="evidence" value="ECO:0000315"/>
    <property type="project" value="MGI"/>
</dbReference>
<dbReference type="GO" id="GO:0021522">
    <property type="term" value="P:spinal cord motor neuron differentiation"/>
    <property type="evidence" value="ECO:0000315"/>
    <property type="project" value="MGI"/>
</dbReference>
<dbReference type="GO" id="GO:0007416">
    <property type="term" value="P:synapse assembly"/>
    <property type="evidence" value="ECO:0000315"/>
    <property type="project" value="MGI"/>
</dbReference>
<dbReference type="GO" id="GO:0035249">
    <property type="term" value="P:synaptic transmission, glutamatergic"/>
    <property type="evidence" value="ECO:0000315"/>
    <property type="project" value="MGI"/>
</dbReference>
<dbReference type="GO" id="GO:0019226">
    <property type="term" value="P:transmission of nerve impulse"/>
    <property type="evidence" value="ECO:0000315"/>
    <property type="project" value="MGI"/>
</dbReference>
<dbReference type="GO" id="GO:0021750">
    <property type="term" value="P:vestibular nucleus development"/>
    <property type="evidence" value="ECO:0000315"/>
    <property type="project" value="MGI"/>
</dbReference>
<dbReference type="FunFam" id="1.20.120.350:FF:000001">
    <property type="entry name" value="Voltage-dependent L-type calcium channel subunit alpha"/>
    <property type="match status" value="1"/>
</dbReference>
<dbReference type="FunFam" id="1.10.238.10:FF:000063">
    <property type="entry name" value="Voltage-dependent N-type calcium channel subunit alpha"/>
    <property type="match status" value="1"/>
</dbReference>
<dbReference type="FunFam" id="1.20.120.350:FF:000011">
    <property type="entry name" value="Voltage-dependent N-type calcium channel subunit alpha"/>
    <property type="match status" value="1"/>
</dbReference>
<dbReference type="FunFam" id="1.20.120.350:FF:000013">
    <property type="entry name" value="Voltage-dependent N-type calcium channel subunit alpha"/>
    <property type="match status" value="1"/>
</dbReference>
<dbReference type="FunFam" id="1.20.120.350:FF:000015">
    <property type="entry name" value="Voltage-dependent N-type calcium channel subunit alpha"/>
    <property type="match status" value="1"/>
</dbReference>
<dbReference type="FunFam" id="1.10.287.70:FF:000023">
    <property type="entry name" value="Voltage-dependent R-type calcium channel subunit alpha"/>
    <property type="match status" value="1"/>
</dbReference>
<dbReference type="FunFam" id="1.10.287.70:FF:000025">
    <property type="entry name" value="Voltage-dependent R-type calcium channel subunit alpha"/>
    <property type="match status" value="1"/>
</dbReference>
<dbReference type="Gene3D" id="1.10.287.70">
    <property type="match status" value="4"/>
</dbReference>
<dbReference type="Gene3D" id="6.10.250.2180">
    <property type="match status" value="1"/>
</dbReference>
<dbReference type="Gene3D" id="6.10.250.2500">
    <property type="match status" value="1"/>
</dbReference>
<dbReference type="Gene3D" id="1.20.120.350">
    <property type="entry name" value="Voltage-gated potassium channels. Chain C"/>
    <property type="match status" value="4"/>
</dbReference>
<dbReference type="InterPro" id="IPR005448">
    <property type="entry name" value="CACNA1A"/>
</dbReference>
<dbReference type="InterPro" id="IPR031649">
    <property type="entry name" value="GPHH_dom"/>
</dbReference>
<dbReference type="InterPro" id="IPR005821">
    <property type="entry name" value="Ion_trans_dom"/>
</dbReference>
<dbReference type="InterPro" id="IPR014873">
    <property type="entry name" value="VDCC_a1su_IQ"/>
</dbReference>
<dbReference type="InterPro" id="IPR050599">
    <property type="entry name" value="VDCC_alpha-1_subunit"/>
</dbReference>
<dbReference type="InterPro" id="IPR002077">
    <property type="entry name" value="VDCCAlpha1"/>
</dbReference>
<dbReference type="InterPro" id="IPR027359">
    <property type="entry name" value="Volt_channel_dom_sf"/>
</dbReference>
<dbReference type="PANTHER" id="PTHR45628">
    <property type="entry name" value="VOLTAGE-DEPENDENT CALCIUM CHANNEL TYPE A SUBUNIT ALPHA-1"/>
    <property type="match status" value="1"/>
</dbReference>
<dbReference type="PANTHER" id="PTHR45628:SF3">
    <property type="entry name" value="VOLTAGE-DEPENDENT P_Q-TYPE CALCIUM CHANNEL SUBUNIT ALPHA-1A"/>
    <property type="match status" value="1"/>
</dbReference>
<dbReference type="Pfam" id="PF08763">
    <property type="entry name" value="Ca_chan_IQ"/>
    <property type="match status" value="1"/>
</dbReference>
<dbReference type="Pfam" id="PF16905">
    <property type="entry name" value="GPHH"/>
    <property type="match status" value="1"/>
</dbReference>
<dbReference type="Pfam" id="PF00520">
    <property type="entry name" value="Ion_trans"/>
    <property type="match status" value="4"/>
</dbReference>
<dbReference type="PRINTS" id="PR00167">
    <property type="entry name" value="CACHANNEL"/>
</dbReference>
<dbReference type="PRINTS" id="PR01632">
    <property type="entry name" value="PQVDCCALPHA1"/>
</dbReference>
<dbReference type="SMART" id="SM01062">
    <property type="entry name" value="Ca_chan_IQ"/>
    <property type="match status" value="1"/>
</dbReference>
<dbReference type="SUPFAM" id="SSF81324">
    <property type="entry name" value="Voltage-gated potassium channels"/>
    <property type="match status" value="4"/>
</dbReference>
<comment type="function">
    <text evidence="1 4">Voltage-sensitive calcium channels (VSCC) mediate the entry of calcium ions into excitable cells and are also involved in a variety of calcium-dependent processes, including muscle contraction, hormone or neurotransmitter release, gene expression, cell motility, cell division and cell death. The isoform alpha-1A gives rise to P and/or Q-type calcium currents. P/Q-type calcium channels belong to the 'high-voltage activated' (HVA) group and are specifically blocked by the spider omega-agatoxin-IVA (AC P54282) (By similarity). They are however insensitive to dihydropyridines (DHP).</text>
</comment>
<comment type="catalytic activity">
    <reaction evidence="1">
        <text>Ca(2+)(in) = Ca(2+)(out)</text>
        <dbReference type="Rhea" id="RHEA:29671"/>
        <dbReference type="ChEBI" id="CHEBI:29108"/>
    </reaction>
</comment>
<comment type="subunit">
    <text evidence="1 4">Voltage-dependent calcium channels are multisubunit complexes, consisting of alpha-1, alpha-2, beta and delta subunits in a 1:1:1:1 ratio. The channel activity is directed by the pore-forming and voltage-sensitive alpha-1 subunit. In many cases, this subunit is sufficient to generate voltage-sensitive calcium channel activity. The auxiliary subunits beta and alpha-2/delta linked by a disulfide bridge regulate the channel activity. Interacts with CABP1 (By similarity). Interacts with the spider omega-agatoxin-IVA (AC P30288) (By similarity). Interacts with TSPOAP1 (By similarity).</text>
</comment>
<comment type="subcellular location">
    <subcellularLocation>
        <location evidence="1">Cell membrane</location>
        <topology evidence="5">Multi-pass membrane protein</topology>
    </subcellularLocation>
</comment>
<comment type="tissue specificity">
    <text>Brain specific; mainly found in the cerebellum, olfactory bulb, cerebral cortex, hippocampus, and inferior colliculus. In the hippocampus, expression occurs in pyramidal and granule neurons, as well as in interneurons. Purkinje cells contain predominantly P-type VSCC, the Q-type being a prominent calcium current in cerebellar granule cells.</text>
</comment>
<comment type="domain">
    <text>Each of the four internal repeats contains five hydrophobic transmembrane segments (S1, S2, S3, S5, S6) and one positively charged transmembrane segment (S4). S4 segments probably represent the voltage-sensor and are characterized by a series of positively charged amino acids at every third position.</text>
</comment>
<comment type="disease">
    <text evidence="7">Defects in Cacna1a are the cause of a delayed-onset, recessive neurological disorder seen in tottering (tg) mutants, resulting in ataxia, motor seizures and behavioral absence seizures resembling petit mal epilepsy (or absence epilepsy) in humans. There are two more alleles, leaner (tg(lA)), that is characterized by severe ataxia and frequent death past weaning, but no motor seizures; and rolling Nagoya (tg(rol)), that presents an intermediary phenotype, the ataxia being somewhat more severe that with tg, but without motors seizures. Selective degeneration of cerebellar Purkinje cells has been shown for all these types of mutants. Selective degeneration of cerebellar Purkinje cells has been shown for all these types of mutants.</text>
</comment>
<comment type="similarity">
    <text evidence="8">Belongs to the calcium channel alpha-1 subunit (TC 1.A.1.11) family. CACNA1A subfamily.</text>
</comment>
<keyword id="KW-0106">Calcium</keyword>
<keyword id="KW-0107">Calcium channel</keyword>
<keyword id="KW-0109">Calcium transport</keyword>
<keyword id="KW-1003">Cell membrane</keyword>
<keyword id="KW-0225">Disease variant</keyword>
<keyword id="KW-1015">Disulfide bond</keyword>
<keyword id="KW-0325">Glycoprotein</keyword>
<keyword id="KW-0407">Ion channel</keyword>
<keyword id="KW-0406">Ion transport</keyword>
<keyword id="KW-0472">Membrane</keyword>
<keyword id="KW-0479">Metal-binding</keyword>
<keyword id="KW-0597">Phosphoprotein</keyword>
<keyword id="KW-1185">Reference proteome</keyword>
<keyword id="KW-0677">Repeat</keyword>
<keyword id="KW-0812">Transmembrane</keyword>
<keyword id="KW-1133">Transmembrane helix</keyword>
<keyword id="KW-0813">Transport</keyword>
<keyword id="KW-0851">Voltage-gated channel</keyword>
<feature type="chain" id="PRO_0000053917" description="Voltage-dependent P/Q-type calcium channel subunit alpha-1A">
    <location>
        <begin position="1"/>
        <end position="2368"/>
    </location>
</feature>
<feature type="topological domain" description="Cytoplasmic" evidence="5">
    <location>
        <begin position="1"/>
        <end position="100"/>
    </location>
</feature>
<feature type="transmembrane region" description="Helical; Name=S1 of repeat I" evidence="5">
    <location>
        <begin position="101"/>
        <end position="119"/>
    </location>
</feature>
<feature type="topological domain" description="Extracellular" evidence="5">
    <location>
        <begin position="120"/>
        <end position="138"/>
    </location>
</feature>
<feature type="transmembrane region" description="Helical; Name=S2 of repeat I" evidence="5">
    <location>
        <begin position="139"/>
        <end position="156"/>
    </location>
</feature>
<feature type="topological domain" description="Cytoplasmic" evidence="5">
    <location>
        <begin position="157"/>
        <end position="168"/>
    </location>
</feature>
<feature type="transmembrane region" description="Helical; Name=S3 of repeat I" evidence="5">
    <location>
        <begin position="169"/>
        <end position="184"/>
    </location>
</feature>
<feature type="topological domain" description="Extracellular" evidence="5">
    <location>
        <begin position="185"/>
        <end position="192"/>
    </location>
</feature>
<feature type="transmembrane region" description="Helical; Name=S4 of repeat I" evidence="5">
    <location>
        <begin position="193"/>
        <end position="211"/>
    </location>
</feature>
<feature type="topological domain" description="Cytoplasmic" evidence="5">
    <location>
        <begin position="212"/>
        <end position="230"/>
    </location>
</feature>
<feature type="transmembrane region" description="Helical; Name=S5 of repeat I" evidence="5">
    <location>
        <begin position="231"/>
        <end position="250"/>
    </location>
</feature>
<feature type="topological domain" description="Extracellular" evidence="5">
    <location>
        <begin position="251"/>
        <end position="337"/>
    </location>
</feature>
<feature type="transmembrane region" description="Helical; Name=S6 of repeat I" evidence="5">
    <location>
        <begin position="338"/>
        <end position="362"/>
    </location>
</feature>
<feature type="topological domain" description="Cytoplasmic" evidence="5">
    <location>
        <begin position="363"/>
        <end position="489"/>
    </location>
</feature>
<feature type="transmembrane region" description="Helical; Name=S1 of repeat II" evidence="5">
    <location>
        <begin position="490"/>
        <end position="509"/>
    </location>
</feature>
<feature type="topological domain" description="Extracellular" evidence="5">
    <location>
        <begin position="510"/>
        <end position="523"/>
    </location>
</feature>
<feature type="transmembrane region" description="Helical; Name=S2 of repeat II" evidence="5">
    <location>
        <begin position="524"/>
        <end position="543"/>
    </location>
</feature>
<feature type="topological domain" description="Cytoplasmic" evidence="5">
    <location>
        <begin position="544"/>
        <end position="551"/>
    </location>
</feature>
<feature type="transmembrane region" description="Helical; Name=S3 of repeat II" evidence="5">
    <location>
        <begin position="552"/>
        <end position="570"/>
    </location>
</feature>
<feature type="topological domain" description="Extracellular" evidence="5">
    <location>
        <begin position="571"/>
        <end position="580"/>
    </location>
</feature>
<feature type="transmembrane region" description="Helical; Name=S4 of repeat II" evidence="5">
    <location>
        <begin position="581"/>
        <end position="599"/>
    </location>
</feature>
<feature type="topological domain" description="Cytoplasmic" evidence="5">
    <location>
        <begin position="600"/>
        <end position="618"/>
    </location>
</feature>
<feature type="transmembrane region" description="Helical; Name=S5 of repeat II" evidence="5">
    <location>
        <begin position="619"/>
        <end position="638"/>
    </location>
</feature>
<feature type="topological domain" description="Extracellular" evidence="5">
    <location>
        <begin position="639"/>
        <end position="691"/>
    </location>
</feature>
<feature type="transmembrane region" description="Helical; Name=S6 of repeat II" evidence="5">
    <location>
        <begin position="692"/>
        <end position="716"/>
    </location>
</feature>
<feature type="topological domain" description="Cytoplasmic" evidence="5">
    <location>
        <begin position="717"/>
        <end position="1190"/>
    </location>
</feature>
<feature type="transmembrane region" description="Helical; Name=S1 of repeat III" evidence="5">
    <location>
        <begin position="1191"/>
        <end position="1214"/>
    </location>
</feature>
<feature type="topological domain" description="Extracellular" evidence="5">
    <location>
        <begin position="1215"/>
        <end position="1231"/>
    </location>
</feature>
<feature type="transmembrane region" description="Helical; Name=S2 of repeat III" evidence="5">
    <location>
        <begin position="1232"/>
        <end position="1251"/>
    </location>
</feature>
<feature type="topological domain" description="Cytoplasmic" evidence="5">
    <location>
        <begin position="1252"/>
        <end position="1258"/>
    </location>
</feature>
<feature type="transmembrane region" description="Helical; Name=S3 of repeat III" evidence="5">
    <location>
        <begin position="1259"/>
        <end position="1282"/>
    </location>
</feature>
<feature type="topological domain" description="Extracellular" evidence="5">
    <location>
        <begin position="1283"/>
        <end position="1293"/>
    </location>
</feature>
<feature type="transmembrane region" description="Helical; Name=S4 of repeat III" evidence="5">
    <location>
        <begin position="1294"/>
        <end position="1311"/>
    </location>
</feature>
<feature type="topological domain" description="Cytoplasmic" evidence="5">
    <location>
        <begin position="1312"/>
        <end position="1330"/>
    </location>
</feature>
<feature type="transmembrane region" description="Helical; Name=S5 of repeat III" evidence="5">
    <location>
        <begin position="1331"/>
        <end position="1350"/>
    </location>
</feature>
<feature type="topological domain" description="Extracellular" evidence="5">
    <location>
        <begin position="1351"/>
        <end position="1437"/>
    </location>
</feature>
<feature type="transmembrane region" description="Helical; Name=S6 of repeat III" evidence="5">
    <location>
        <begin position="1438"/>
        <end position="1462"/>
    </location>
</feature>
<feature type="topological domain" description="Cytoplasmic" evidence="5">
    <location>
        <begin position="1463"/>
        <end position="1518"/>
    </location>
</feature>
<feature type="transmembrane region" description="Helical; Name=S1 of repeat IV" evidence="5">
    <location>
        <begin position="1519"/>
        <end position="1537"/>
    </location>
</feature>
<feature type="topological domain" description="Extracellular" evidence="5">
    <location>
        <begin position="1538"/>
        <end position="1551"/>
    </location>
</feature>
<feature type="transmembrane region" description="Helical; Name=S2 of repeat IV" evidence="5">
    <location>
        <begin position="1552"/>
        <end position="1573"/>
    </location>
</feature>
<feature type="topological domain" description="Cytoplasmic" evidence="5">
    <location>
        <begin position="1574"/>
        <end position="1580"/>
    </location>
</feature>
<feature type="transmembrane region" description="Helical; Name=S3 of repeat IV" evidence="5">
    <location>
        <begin position="1581"/>
        <end position="1600"/>
    </location>
</feature>
<feature type="topological domain" description="Extracellular" evidence="5">
    <location>
        <begin position="1601"/>
        <end position="1607"/>
    </location>
</feature>
<feature type="transmembrane region" description="Helical; Name=S4 of repeat IV" evidence="5">
    <location>
        <begin position="1608"/>
        <end position="1626"/>
    </location>
</feature>
<feature type="topological domain" description="Cytoplasmic" evidence="5">
    <location>
        <begin position="1627"/>
        <end position="1645"/>
    </location>
</feature>
<feature type="transmembrane region" description="Helical; Name=S5 of repeat IV" evidence="5">
    <location>
        <begin position="1646"/>
        <end position="1665"/>
    </location>
</feature>
<feature type="topological domain" description="Extracellular" evidence="5">
    <location>
        <begin position="1666"/>
        <end position="1737"/>
    </location>
</feature>
<feature type="transmembrane region" description="Helical; Name=S6 of repeat IV" evidence="5">
    <location>
        <begin position="1738"/>
        <end position="1763"/>
    </location>
</feature>
<feature type="topological domain" description="Cytoplasmic" evidence="5">
    <location>
        <begin position="1764"/>
        <end position="2368"/>
    </location>
</feature>
<feature type="repeat" description="I">
    <location>
        <begin position="65"/>
        <end position="365"/>
    </location>
</feature>
<feature type="repeat" description="II">
    <location>
        <begin position="475"/>
        <end position="719"/>
    </location>
</feature>
<feature type="repeat" description="III">
    <location>
        <begin position="1182"/>
        <end position="1465"/>
    </location>
</feature>
<feature type="repeat" description="IV">
    <location>
        <begin position="1502"/>
        <end position="1765"/>
    </location>
</feature>
<feature type="region of interest" description="Binding to the beta subunit" evidence="3">
    <location>
        <begin position="385"/>
        <end position="402"/>
    </location>
</feature>
<feature type="region of interest" description="Disordered" evidence="6">
    <location>
        <begin position="762"/>
        <end position="781"/>
    </location>
</feature>
<feature type="region of interest" description="Disordered" evidence="6">
    <location>
        <begin position="823"/>
        <end position="1117"/>
    </location>
</feature>
<feature type="region of interest" description="Disordered" evidence="6">
    <location>
        <begin position="1137"/>
        <end position="1170"/>
    </location>
</feature>
<feature type="region of interest" description="Disordered" evidence="6">
    <location>
        <begin position="1940"/>
        <end position="2368"/>
    </location>
</feature>
<feature type="compositionally biased region" description="Polar residues" evidence="6">
    <location>
        <begin position="769"/>
        <end position="779"/>
    </location>
</feature>
<feature type="compositionally biased region" description="Basic and acidic residues" evidence="6">
    <location>
        <begin position="850"/>
        <end position="862"/>
    </location>
</feature>
<feature type="compositionally biased region" description="Basic and acidic residues" evidence="6">
    <location>
        <begin position="871"/>
        <end position="924"/>
    </location>
</feature>
<feature type="compositionally biased region" description="Basic and acidic residues" evidence="6">
    <location>
        <begin position="932"/>
        <end position="958"/>
    </location>
</feature>
<feature type="compositionally biased region" description="Polar residues" evidence="6">
    <location>
        <begin position="1056"/>
        <end position="1073"/>
    </location>
</feature>
<feature type="compositionally biased region" description="Low complexity" evidence="6">
    <location>
        <begin position="1074"/>
        <end position="1083"/>
    </location>
</feature>
<feature type="compositionally biased region" description="Polar residues" evidence="6">
    <location>
        <begin position="1094"/>
        <end position="1111"/>
    </location>
</feature>
<feature type="compositionally biased region" description="Acidic residues" evidence="6">
    <location>
        <begin position="1153"/>
        <end position="1163"/>
    </location>
</feature>
<feature type="compositionally biased region" description="Polar residues" evidence="6">
    <location>
        <begin position="1948"/>
        <end position="1963"/>
    </location>
</feature>
<feature type="compositionally biased region" description="Polar residues" evidence="6">
    <location>
        <begin position="1981"/>
        <end position="1997"/>
    </location>
</feature>
<feature type="compositionally biased region" description="Polar residues" evidence="6">
    <location>
        <begin position="2008"/>
        <end position="2017"/>
    </location>
</feature>
<feature type="compositionally biased region" description="Basic and acidic residues" evidence="6">
    <location>
        <begin position="2018"/>
        <end position="2034"/>
    </location>
</feature>
<feature type="compositionally biased region" description="Polar residues" evidence="6">
    <location>
        <begin position="2063"/>
        <end position="2073"/>
    </location>
</feature>
<feature type="compositionally biased region" description="Basic and acidic residues" evidence="6">
    <location>
        <begin position="2085"/>
        <end position="2102"/>
    </location>
</feature>
<feature type="compositionally biased region" description="Basic and acidic residues" evidence="6">
    <location>
        <begin position="2143"/>
        <end position="2153"/>
    </location>
</feature>
<feature type="compositionally biased region" description="Basic residues" evidence="6">
    <location>
        <begin position="2154"/>
        <end position="2172"/>
    </location>
</feature>
<feature type="compositionally biased region" description="Basic and acidic residues" evidence="6">
    <location>
        <begin position="2173"/>
        <end position="2209"/>
    </location>
</feature>
<feature type="compositionally biased region" description="Low complexity" evidence="6">
    <location>
        <begin position="2213"/>
        <end position="2231"/>
    </location>
</feature>
<feature type="compositionally biased region" description="Basic and acidic residues" evidence="6">
    <location>
        <begin position="2289"/>
        <end position="2305"/>
    </location>
</feature>
<feature type="binding site" evidence="2">
    <location>
        <position position="320"/>
    </location>
    <ligand>
        <name>Ca(2+)</name>
        <dbReference type="ChEBI" id="CHEBI:29108"/>
    </ligand>
</feature>
<feature type="binding site" evidence="2">
    <location>
        <position position="670"/>
    </location>
    <ligand>
        <name>Ca(2+)</name>
        <dbReference type="ChEBI" id="CHEBI:29108"/>
    </ligand>
</feature>
<feature type="binding site" evidence="2">
    <location>
        <position position="1411"/>
    </location>
    <ligand>
        <name>Ca(2+)</name>
        <dbReference type="ChEBI" id="CHEBI:29108"/>
    </ligand>
</feature>
<feature type="site" description="Binds to omega-Aga-IVA" evidence="3">
    <location>
        <position position="1600"/>
    </location>
</feature>
<feature type="modified residue" description="Phosphothreonine" evidence="11">
    <location>
        <position position="411"/>
    </location>
</feature>
<feature type="modified residue" description="Phosphoserine" evidence="11">
    <location>
        <position position="450"/>
    </location>
</feature>
<feature type="modified residue" description="Phosphoserine" evidence="11">
    <location>
        <position position="453"/>
    </location>
</feature>
<feature type="modified residue" description="Phosphoserine" evidence="11">
    <location>
        <position position="752"/>
    </location>
</feature>
<feature type="modified residue" description="Phosphoserine" evidence="11">
    <location>
        <position position="755"/>
    </location>
</feature>
<feature type="modified residue" description="Phosphoserine" evidence="10">
    <location>
        <position position="792"/>
    </location>
</feature>
<feature type="modified residue" description="Phosphoserine" evidence="11">
    <location>
        <position position="1038"/>
    </location>
</feature>
<feature type="modified residue" description="Phosphoserine" evidence="11">
    <location>
        <position position="1042"/>
    </location>
</feature>
<feature type="modified residue" description="Phosphoserine" evidence="11">
    <location>
        <position position="1051"/>
    </location>
</feature>
<feature type="modified residue" description="Phosphothreonine" evidence="11">
    <location>
        <position position="1935"/>
    </location>
</feature>
<feature type="modified residue" description="Phosphoserine" evidence="4">
    <location>
        <position position="1998"/>
    </location>
</feature>
<feature type="modified residue" description="Phosphoserine" evidence="11">
    <location>
        <position position="2016"/>
    </location>
</feature>
<feature type="modified residue" description="Phosphoserine" evidence="4">
    <location>
        <position position="2028"/>
    </location>
</feature>
<feature type="modified residue" description="Phosphoserine" evidence="4">
    <location>
        <position position="2030"/>
    </location>
</feature>
<feature type="modified residue" description="Phosphoserine" evidence="11">
    <location>
        <position position="2071"/>
    </location>
</feature>
<feature type="modified residue" description="Phosphoserine" evidence="4">
    <location>
        <position position="2091"/>
    </location>
</feature>
<feature type="glycosylation site" description="N-linked (GlcNAc...) asparagine" evidence="5">
    <location>
        <position position="285"/>
    </location>
</feature>
<feature type="glycosylation site" description="N-linked (GlcNAc...) asparagine" evidence="5">
    <location>
        <position position="1607"/>
    </location>
</feature>
<feature type="sequence variant" description="In tg." evidence="7">
    <original>P</original>
    <variation>L</variation>
    <location>
        <position position="649"/>
    </location>
</feature>
<feature type="sequence conflict" description="In Ref. 2; AAC52940." evidence="8" ref="2">
    <original>S</original>
    <variation>P</variation>
    <location>
        <position position="79"/>
    </location>
</feature>
<feature type="sequence conflict" description="In Ref. 2; AAC52940." evidence="8" ref="2">
    <original>L</original>
    <variation>F</variation>
    <location>
        <position position="82"/>
    </location>
</feature>
<feature type="sequence conflict" description="In Ref. 2; AAC52940." evidence="8" ref="2">
    <original>P</original>
    <variation>L</variation>
    <location>
        <position position="884"/>
    </location>
</feature>
<feature type="sequence conflict" description="In Ref. 1; AAW56205." evidence="8" ref="1">
    <original>E</original>
    <variation>D</variation>
    <location>
        <position position="888"/>
    </location>
</feature>
<feature type="sequence conflict" description="In Ref. 2; AAC52940." evidence="8" ref="2">
    <original>N</original>
    <variation>D</variation>
    <location>
        <position position="1083"/>
    </location>
</feature>
<feature type="sequence conflict" description="In Ref. 2; AAC52940." evidence="8" ref="2">
    <original>L</original>
    <variation>F</variation>
    <location>
        <position position="1349"/>
    </location>
</feature>
<feature type="sequence conflict" description="In Ref. 2; AAC52940." evidence="8" ref="2">
    <original>L</original>
    <variation>F</variation>
    <location>
        <position position="1373"/>
    </location>
</feature>
<feature type="sequence conflict" description="In Ref. 1; AAW56205." evidence="8" ref="1">
    <original>P</original>
    <variation>PH</variation>
    <location>
        <position position="2161"/>
    </location>
</feature>
<name>CAC1A_MOUSE</name>